<evidence type="ECO:0000255" key="1">
    <source>
        <dbReference type="HAMAP-Rule" id="MF_00384"/>
    </source>
</evidence>
<dbReference type="EC" id="2.7.1.39" evidence="1"/>
<dbReference type="EMBL" id="CP001015">
    <property type="protein sequence ID" value="ACF56078.1"/>
    <property type="molecule type" value="Genomic_DNA"/>
</dbReference>
<dbReference type="SMR" id="B5E5F6"/>
<dbReference type="KEGG" id="spx:SPG_1301"/>
<dbReference type="HOGENOM" id="CLU_041243_0_0_9"/>
<dbReference type="UniPathway" id="UPA00050">
    <property type="reaction ID" value="UER00064"/>
</dbReference>
<dbReference type="GO" id="GO:0005737">
    <property type="term" value="C:cytoplasm"/>
    <property type="evidence" value="ECO:0007669"/>
    <property type="project" value="UniProtKB-SubCell"/>
</dbReference>
<dbReference type="GO" id="GO:0005524">
    <property type="term" value="F:ATP binding"/>
    <property type="evidence" value="ECO:0007669"/>
    <property type="project" value="UniProtKB-UniRule"/>
</dbReference>
<dbReference type="GO" id="GO:0004413">
    <property type="term" value="F:homoserine kinase activity"/>
    <property type="evidence" value="ECO:0007669"/>
    <property type="project" value="UniProtKB-UniRule"/>
</dbReference>
<dbReference type="GO" id="GO:0009088">
    <property type="term" value="P:threonine biosynthetic process"/>
    <property type="evidence" value="ECO:0007669"/>
    <property type="project" value="UniProtKB-UniRule"/>
</dbReference>
<dbReference type="Gene3D" id="3.30.230.10">
    <property type="match status" value="1"/>
</dbReference>
<dbReference type="Gene3D" id="3.30.70.890">
    <property type="entry name" value="GHMP kinase, C-terminal domain"/>
    <property type="match status" value="1"/>
</dbReference>
<dbReference type="HAMAP" id="MF_00384">
    <property type="entry name" value="Homoser_kinase"/>
    <property type="match status" value="1"/>
</dbReference>
<dbReference type="InterPro" id="IPR013750">
    <property type="entry name" value="GHMP_kinase_C_dom"/>
</dbReference>
<dbReference type="InterPro" id="IPR036554">
    <property type="entry name" value="GHMP_kinase_C_sf"/>
</dbReference>
<dbReference type="InterPro" id="IPR006204">
    <property type="entry name" value="GHMP_kinase_N_dom"/>
</dbReference>
<dbReference type="InterPro" id="IPR006203">
    <property type="entry name" value="GHMP_knse_ATP-bd_CS"/>
</dbReference>
<dbReference type="InterPro" id="IPR000870">
    <property type="entry name" value="Homoserine_kinase"/>
</dbReference>
<dbReference type="InterPro" id="IPR020568">
    <property type="entry name" value="Ribosomal_Su5_D2-typ_SF"/>
</dbReference>
<dbReference type="InterPro" id="IPR014721">
    <property type="entry name" value="Ribsml_uS5_D2-typ_fold_subgr"/>
</dbReference>
<dbReference type="NCBIfam" id="TIGR00191">
    <property type="entry name" value="thrB"/>
    <property type="match status" value="1"/>
</dbReference>
<dbReference type="PANTHER" id="PTHR20861:SF1">
    <property type="entry name" value="HOMOSERINE KINASE"/>
    <property type="match status" value="1"/>
</dbReference>
<dbReference type="PANTHER" id="PTHR20861">
    <property type="entry name" value="HOMOSERINE/4-DIPHOSPHOCYTIDYL-2-C-METHYL-D-ERYTHRITOL KINASE"/>
    <property type="match status" value="1"/>
</dbReference>
<dbReference type="Pfam" id="PF08544">
    <property type="entry name" value="GHMP_kinases_C"/>
    <property type="match status" value="1"/>
</dbReference>
<dbReference type="Pfam" id="PF00288">
    <property type="entry name" value="GHMP_kinases_N"/>
    <property type="match status" value="1"/>
</dbReference>
<dbReference type="PIRSF" id="PIRSF000676">
    <property type="entry name" value="Homoser_kin"/>
    <property type="match status" value="1"/>
</dbReference>
<dbReference type="PRINTS" id="PR00958">
    <property type="entry name" value="HOMSERKINASE"/>
</dbReference>
<dbReference type="SUPFAM" id="SSF55060">
    <property type="entry name" value="GHMP Kinase, C-terminal domain"/>
    <property type="match status" value="1"/>
</dbReference>
<dbReference type="SUPFAM" id="SSF54211">
    <property type="entry name" value="Ribosomal protein S5 domain 2-like"/>
    <property type="match status" value="1"/>
</dbReference>
<dbReference type="PROSITE" id="PS00627">
    <property type="entry name" value="GHMP_KINASES_ATP"/>
    <property type="match status" value="1"/>
</dbReference>
<organism>
    <name type="scientific">Streptococcus pneumoniae serotype 19F (strain G54)</name>
    <dbReference type="NCBI Taxonomy" id="512566"/>
    <lineage>
        <taxon>Bacteria</taxon>
        <taxon>Bacillati</taxon>
        <taxon>Bacillota</taxon>
        <taxon>Bacilli</taxon>
        <taxon>Lactobacillales</taxon>
        <taxon>Streptococcaceae</taxon>
        <taxon>Streptococcus</taxon>
    </lineage>
</organism>
<gene>
    <name evidence="1" type="primary">thrB</name>
    <name type="ordered locus">SPG_1301</name>
</gene>
<name>KHSE_STRP4</name>
<accession>B5E5F6</accession>
<reference key="1">
    <citation type="journal article" date="2001" name="Microb. Drug Resist.">
        <title>Annotated draft genomic sequence from a Streptococcus pneumoniae type 19F clinical isolate.</title>
        <authorList>
            <person name="Dopazo J."/>
            <person name="Mendoza A."/>
            <person name="Herrero J."/>
            <person name="Caldara F."/>
            <person name="Humbert Y."/>
            <person name="Friedli L."/>
            <person name="Guerrier M."/>
            <person name="Grand-Schenk E."/>
            <person name="Gandin C."/>
            <person name="de Francesco M."/>
            <person name="Polissi A."/>
            <person name="Buell G."/>
            <person name="Feger G."/>
            <person name="Garcia E."/>
            <person name="Peitsch M."/>
            <person name="Garcia-Bustos J.F."/>
        </authorList>
    </citation>
    <scope>NUCLEOTIDE SEQUENCE [LARGE SCALE GENOMIC DNA]</scope>
    <source>
        <strain>G54</strain>
    </source>
</reference>
<reference key="2">
    <citation type="submission" date="2008-03" db="EMBL/GenBank/DDBJ databases">
        <title>Pneumococcal beta glucoside metabolism investigated by whole genome comparison.</title>
        <authorList>
            <person name="Mulas L."/>
            <person name="Trappetti C."/>
            <person name="Hakenbeck R."/>
            <person name="Iannelli F."/>
            <person name="Pozzi G."/>
            <person name="Davidsen T.M."/>
            <person name="Tettelin H."/>
            <person name="Oggioni M."/>
        </authorList>
    </citation>
    <scope>NUCLEOTIDE SEQUENCE [LARGE SCALE GENOMIC DNA]</scope>
    <source>
        <strain>G54</strain>
    </source>
</reference>
<keyword id="KW-0028">Amino-acid biosynthesis</keyword>
<keyword id="KW-0067">ATP-binding</keyword>
<keyword id="KW-0963">Cytoplasm</keyword>
<keyword id="KW-0418">Kinase</keyword>
<keyword id="KW-0547">Nucleotide-binding</keyword>
<keyword id="KW-0791">Threonine biosynthesis</keyword>
<keyword id="KW-0808">Transferase</keyword>
<comment type="function">
    <text evidence="1">Catalyzes the ATP-dependent phosphorylation of L-homoserine to L-homoserine phosphate.</text>
</comment>
<comment type="catalytic activity">
    <reaction evidence="1">
        <text>L-homoserine + ATP = O-phospho-L-homoserine + ADP + H(+)</text>
        <dbReference type="Rhea" id="RHEA:13985"/>
        <dbReference type="ChEBI" id="CHEBI:15378"/>
        <dbReference type="ChEBI" id="CHEBI:30616"/>
        <dbReference type="ChEBI" id="CHEBI:57476"/>
        <dbReference type="ChEBI" id="CHEBI:57590"/>
        <dbReference type="ChEBI" id="CHEBI:456216"/>
        <dbReference type="EC" id="2.7.1.39"/>
    </reaction>
</comment>
<comment type="pathway">
    <text evidence="1">Amino-acid biosynthesis; L-threonine biosynthesis; L-threonine from L-aspartate: step 4/5.</text>
</comment>
<comment type="subcellular location">
    <subcellularLocation>
        <location evidence="1">Cytoplasm</location>
    </subcellularLocation>
</comment>
<comment type="similarity">
    <text evidence="1">Belongs to the GHMP kinase family. Homoserine kinase subfamily.</text>
</comment>
<feature type="chain" id="PRO_1000122445" description="Homoserine kinase">
    <location>
        <begin position="1"/>
        <end position="289"/>
    </location>
</feature>
<feature type="binding site" evidence="1">
    <location>
        <begin position="79"/>
        <end position="89"/>
    </location>
    <ligand>
        <name>ATP</name>
        <dbReference type="ChEBI" id="CHEBI:30616"/>
    </ligand>
</feature>
<proteinExistence type="inferred from homology"/>
<sequence length="289" mass="31548">MKIIVPATSANIGPGFDSVGVAVTKYLQIEVCEERDEWLIEHQIGKWIPHDERNLLLKIALQIVPDLQPRRLKMTSDVPLARGLGSSSSVIVAGIELANQLGQLNLSDHEKLQLATKIEGHPDNVAPAIYGNLVIASSVEGQVSAIVADFPECDFLAYIPNYELRTRDSRSVLPKKLSYKEAVAASSIANVAVAALLAGDMVTAGQAIEGDLFHERYRQDLVREFAMIKQVTKENGAYATYLSGAGPTVMVLASHDKMPTIKAELEKQPFKGKLHDLRVDTQGVRVEAK</sequence>
<protein>
    <recommendedName>
        <fullName evidence="1">Homoserine kinase</fullName>
        <shortName evidence="1">HK</shortName>
        <shortName evidence="1">HSK</shortName>
        <ecNumber evidence="1">2.7.1.39</ecNumber>
    </recommendedName>
</protein>